<organism>
    <name type="scientific">Caenorhabditis elegans</name>
    <dbReference type="NCBI Taxonomy" id="6239"/>
    <lineage>
        <taxon>Eukaryota</taxon>
        <taxon>Metazoa</taxon>
        <taxon>Ecdysozoa</taxon>
        <taxon>Nematoda</taxon>
        <taxon>Chromadorea</taxon>
        <taxon>Rhabditida</taxon>
        <taxon>Rhabditina</taxon>
        <taxon>Rhabditomorpha</taxon>
        <taxon>Rhabditoidea</taxon>
        <taxon>Rhabditidae</taxon>
        <taxon>Peloderinae</taxon>
        <taxon>Caenorhabditis</taxon>
    </lineage>
</organism>
<feature type="initiator methionine" description="Removed" evidence="14">
    <location>
        <position position="1"/>
    </location>
</feature>
<feature type="chain" id="PRO_0000221297" description="Histone H3">
    <location>
        <begin position="2"/>
        <end position="136"/>
    </location>
</feature>
<feature type="region of interest" description="Disordered" evidence="2">
    <location>
        <begin position="1"/>
        <end position="43"/>
    </location>
</feature>
<feature type="modified residue" description="N6,N6,N6-trimethyllysine; alternate" evidence="4 5 8 10">
    <location>
        <position position="5"/>
    </location>
</feature>
<feature type="modified residue" description="N6,N6-dimethyllysine; alternate" evidence="4 5 8 10">
    <location>
        <position position="5"/>
    </location>
</feature>
<feature type="modified residue" description="N6-acetyllysine; alternate" evidence="14">
    <location>
        <position position="5"/>
    </location>
</feature>
<feature type="modified residue" description="N6-methyllysine; alternate" evidence="4 5 8 10">
    <location>
        <position position="5"/>
    </location>
</feature>
<feature type="modified residue" description="N6,N6,N6-trimethyllysine; alternate" evidence="4 5 8 10 12 14">
    <location>
        <position position="10"/>
    </location>
</feature>
<feature type="modified residue" description="N6,N6-dimethyllysine; alternate" evidence="4 5 8 10 12 14">
    <location>
        <position position="10"/>
    </location>
</feature>
<feature type="modified residue" description="N6-acetyllysine; alternate" evidence="4 10">
    <location>
        <position position="10"/>
    </location>
</feature>
<feature type="modified residue" description="Phosphoserine" evidence="3 4 6 7 8 9 10">
    <location>
        <position position="11"/>
    </location>
</feature>
<feature type="modified residue" description="N6-acetyllysine" evidence="4 10 14">
    <location>
        <position position="15"/>
    </location>
</feature>
<feature type="modified residue" description="N6-acetyllysine" evidence="14">
    <location>
        <position position="24"/>
    </location>
</feature>
<feature type="modified residue" description="N6,N6,N6-trimethyllysine; alternate" evidence="11 14">
    <location>
        <position position="28"/>
    </location>
</feature>
<feature type="modified residue" description="N6,N6-dimethyllysine; alternate" evidence="11 14">
    <location>
        <position position="28"/>
    </location>
</feature>
<feature type="modified residue" description="N6-methyllysine; alternate" evidence="11 14">
    <location>
        <position position="28"/>
    </location>
</feature>
<feature type="modified residue" description="Phosphoserine" evidence="6 9">
    <location>
        <position position="29"/>
    </location>
</feature>
<feature type="modified residue" description="N6,N6,N6-trimethyllysine; alternate" evidence="8 12 14">
    <location>
        <position position="37"/>
    </location>
</feature>
<feature type="modified residue" description="N6,N6-dimethyllysine; alternate" evidence="8 12 14">
    <location>
        <position position="37"/>
    </location>
</feature>
<feature type="modified residue" description="N6-methyllysine; alternate" evidence="8 12 14">
    <location>
        <position position="37"/>
    </location>
</feature>
<feature type="modified residue" description="N6-methyllysine" evidence="14">
    <location>
        <position position="80"/>
    </location>
</feature>
<feature type="sequence variant">
    <original>C</original>
    <variation>A</variation>
    <location>
        <position position="97"/>
    </location>
</feature>
<feature type="sequence variant">
    <original>L</original>
    <variation>I</variation>
    <location>
        <position position="101"/>
    </location>
</feature>
<feature type="strand" evidence="17">
    <location>
        <begin position="4"/>
        <end position="6"/>
    </location>
</feature>
<evidence type="ECO:0000250" key="1"/>
<evidence type="ECO:0000256" key="2">
    <source>
        <dbReference type="SAM" id="MobiDB-lite"/>
    </source>
</evidence>
<evidence type="ECO:0000269" key="3">
    <source>
    </source>
</evidence>
<evidence type="ECO:0000269" key="4">
    <source>
    </source>
</evidence>
<evidence type="ECO:0000269" key="5">
    <source>
    </source>
</evidence>
<evidence type="ECO:0000269" key="6">
    <source>
    </source>
</evidence>
<evidence type="ECO:0000269" key="7">
    <source>
    </source>
</evidence>
<evidence type="ECO:0000269" key="8">
    <source>
    </source>
</evidence>
<evidence type="ECO:0000269" key="9">
    <source>
    </source>
</evidence>
<evidence type="ECO:0000269" key="10">
    <source>
    </source>
</evidence>
<evidence type="ECO:0000269" key="11">
    <source>
    </source>
</evidence>
<evidence type="ECO:0000269" key="12">
    <source>
    </source>
</evidence>
<evidence type="ECO:0000269" key="13">
    <source>
    </source>
</evidence>
<evidence type="ECO:0000269" key="14">
    <source>
    </source>
</evidence>
<evidence type="ECO:0000305" key="15"/>
<evidence type="ECO:0007744" key="16">
    <source>
        <dbReference type="PDB" id="7LHY"/>
    </source>
</evidence>
<evidence type="ECO:0007829" key="17">
    <source>
        <dbReference type="PDB" id="3N9N"/>
    </source>
</evidence>
<proteinExistence type="evidence at protein level"/>
<comment type="function">
    <text>Core component of nucleosome. Nucleosomes wrap and compact DNA into chromatin, limiting DNA accessibility to the cellular machineries which require DNA as a template. Histones thereby play a central role in transcription regulation, DNA repair, DNA replication and chromosomal stability. DNA accessibility is regulated via a complex set of post-translational modifications of histones, also called histone code, and nucleosome remodeling.</text>
</comment>
<comment type="subunit">
    <text evidence="13">The nucleosome is a histone octamer containing two molecules each of H2A, H2B, H3 and H4 assembled in one H3-H4 heterotetramer and two H2A-H2B heterodimers. The octamer wraps approximately 147 bp of DNA. Interacts (via N-terminal tail mono-acetylated on Lys-15) with swsn-4 (via Bromo domain); the interaction is direct (PubMed:34473995).</text>
</comment>
<comment type="subcellular location">
    <subcellularLocation>
        <location>Nucleus</location>
    </subcellularLocation>
    <subcellularLocation>
        <location>Chromosome</location>
    </subcellularLocation>
</comment>
<comment type="PTM">
    <text evidence="3 4 6 7 8 9 10">Phosphorylated at Ser-11 and Ser-29 during M phase. Phosphorylation of Ser-11 requires air-2 but not air-1. Dephosphorylated by gsp-1 and/or gsp-2 during chromosome segregation.</text>
</comment>
<comment type="PTM">
    <text evidence="1">Acetylation is generally linked to gene activation.</text>
</comment>
<comment type="PTM">
    <text evidence="4 5 8 10 11 12 14">Methylation at Lys-5 is linked to gene activation and is absent from male inactive X chromosome chromatin. Methylation at Lys-10 is linked to gene repression and is enriched in male inactive X chromosome chromatin. Methylation at Lys-37 occurs on the entire length of autosomes during meiotic prophase. Trimethylation at Lys-10 and Lys-37 is specifically antagonized by jmjd-2. Dimethylation and trimethylation at Lys-28 occurs in all nuclei. The mes-2-mes-3-mes-6 complex may be responsible for Lys-28 methylation in most of the germline and in the early embryo.</text>
</comment>
<comment type="similarity">
    <text evidence="15">Belongs to the histone H3 family.</text>
</comment>
<sequence>MARTKQTARKSTGGKAPRKQLATKAARKSAPASGGVKKPHRYRPGTVALREIRRYQKSTELLIRRAPFQRLVREIAQDFKTDLRFQSSAVMALQEACEAYLVGLFEDTNLCAIHAKRVTIMPKDIQLARRIRGERA</sequence>
<gene>
    <name type="primary">his-2</name>
    <name type="ORF">T10C6.13</name>
</gene>
<gene>
    <name type="primary">his-6</name>
    <name type="ORF">F45F2.13</name>
</gene>
<gene>
    <name type="primary">his-9</name>
    <name type="ORF">ZK131.3</name>
</gene>
<gene>
    <name type="primary">his-13</name>
    <name type="ORF">ZK131.7</name>
</gene>
<gene>
    <name type="primary">his-17</name>
    <name type="ORF">K06C4.5</name>
</gene>
<gene>
    <name type="primary">his-25</name>
    <name type="ORF">ZK131.2</name>
</gene>
<gene>
    <name type="primary">his-27</name>
    <name type="ORF">K06C4.13</name>
</gene>
<gene>
    <name type="primary">his-32</name>
    <name type="ORF">F17E9.10</name>
</gene>
<gene>
    <name type="primary">his-42</name>
    <name type="ORF">F08G2.3</name>
</gene>
<gene>
    <name type="primary">his-45</name>
    <name type="ORF">B0035.10</name>
</gene>
<gene>
    <name type="primary">his-49</name>
    <name type="ORF">F07B7.5</name>
</gene>
<gene>
    <name type="primary">his-55</name>
    <name type="ORF">F54E12.1</name>
</gene>
<gene>
    <name type="primary">his-59</name>
    <name type="ORF">F55G1.2</name>
</gene>
<gene>
    <name type="primary">his-63</name>
    <name type="ORF">F22B3.2</name>
</gene>
<protein>
    <recommendedName>
        <fullName>Histone H3</fullName>
    </recommendedName>
</protein>
<reference key="1">
    <citation type="journal article" date="1989" name="J. Mol. Biol.">
        <title>Nucleotide sequences of Caenorhabditis elegans core histone genes. Genes for different histone classes share common flanking sequence elements.</title>
        <authorList>
            <person name="Roberts S.B."/>
            <person name="Emmons S.W."/>
            <person name="Childs G."/>
        </authorList>
    </citation>
    <scope>NUCLEOTIDE SEQUENCE [GENOMIC DNA] (HIS-10)</scope>
    <source>
        <strain>Bristol N2</strain>
    </source>
</reference>
<reference key="2">
    <citation type="journal article" date="1998" name="Science">
        <title>Genome sequence of the nematode C. elegans: a platform for investigating biology.</title>
        <authorList>
            <consortium name="The C. elegans sequencing consortium"/>
        </authorList>
    </citation>
    <scope>NUCLEOTIDE SEQUENCE [LARGE SCALE GENOMIC DNA]</scope>
    <source>
        <strain>Bristol N2</strain>
    </source>
</reference>
<reference key="3">
    <citation type="submission" date="2000-09" db="EMBL/GenBank/DDBJ databases">
        <title>The Caenorhabditis elegans transcriptome project, a complementary view of the genome.</title>
        <authorList>
            <person name="Kohara Y."/>
            <person name="Shin-i T."/>
            <person name="Suzuki Y."/>
            <person name="Sugano S."/>
            <person name="Potdevin M."/>
            <person name="Thierry-Mieg Y."/>
            <person name="Thierry-Mieg D."/>
            <person name="Thierry-Mieg J."/>
        </authorList>
    </citation>
    <scope>NUCLEOTIDE SEQUENCE [LARGE SCALE MRNA] (HIS-4)</scope>
    <source>
        <strain>Bristol N2</strain>
    </source>
</reference>
<reference key="4">
    <citation type="journal article" date="1987" name="FEBS Lett.">
        <title>The primary structure of histone H3 from the nematode Caenorhabditis elegans.</title>
        <authorList>
            <person name="Vanfleteren J.R."/>
            <person name="van Bun S.M."/>
            <person name="van Beeumen J.J."/>
        </authorList>
    </citation>
    <scope>PROTEIN SEQUENCE OF 2-136</scope>
    <scope>ACETYLATION AT LYS-5; LYS-15 AND LYS-24</scope>
    <scope>METHYLATION AT LYS-10; LYS-28; LYS-37 AND LYS-80</scope>
    <source>
        <strain>DR27</strain>
    </source>
</reference>
<reference key="5">
    <citation type="journal article" date="2000" name="Cell">
        <title>Mitotic phosphorylation of histone H3 is governed by Ipl1/aurora kinase and Glc7/PP1 phosphatase in budding yeast and nematodes.</title>
        <authorList>
            <person name="Hsu J.-Y."/>
            <person name="Sun Z.-W."/>
            <person name="Li X."/>
            <person name="Reuben M."/>
            <person name="Tatchell K."/>
            <person name="Bishop D.K."/>
            <person name="Grushcow J.M."/>
            <person name="Brame C.J."/>
            <person name="Caldwell J.A."/>
            <person name="Hunt D.F."/>
            <person name="Lin R."/>
            <person name="Smith M.M."/>
            <person name="Allis C.D."/>
        </authorList>
    </citation>
    <scope>PHOSPHORYLATION AT SER-11</scope>
</reference>
<reference key="6">
    <citation type="journal article" date="2002" name="Curr. Biol.">
        <title>The aurora B kinase AIR-2 regulates kinetochores during mitosis and is required for separation of homologous Chromosomes during meiosis.</title>
        <authorList>
            <person name="Kaitna S."/>
            <person name="Pasierbek P."/>
            <person name="Jantsch M."/>
            <person name="Loidl J."/>
            <person name="Glotzer M."/>
        </authorList>
    </citation>
    <scope>PHOSPHORYLATION AT SER-11 AND SER-29</scope>
</reference>
<reference key="7">
    <citation type="journal article" date="2002" name="Development">
        <title>X-chromosome silencing in the germline of C. elegans.</title>
        <authorList>
            <person name="Kelly W.G."/>
            <person name="Schaner C.E."/>
            <person name="Dernburg A.F."/>
            <person name="Lee M.-H."/>
            <person name="Kim S.K."/>
            <person name="Villeneuve A.M."/>
            <person name="Reinke V."/>
        </authorList>
    </citation>
    <scope>METHYLATION AT LYS-5 AND LYS-10</scope>
    <scope>PHOSPHORYLATION AT SER-11</scope>
    <scope>ACETYLATION AT LYS-10 AND LYS-15</scope>
</reference>
<reference key="8">
    <citation type="journal article" date="2002" name="Dev. Biol.">
        <title>Germline X chromosomes exhibit contrasting patterns of histone H3 methylation in Caenorhabditis elegans.</title>
        <authorList>
            <person name="Reuben M."/>
            <person name="Lin R."/>
        </authorList>
    </citation>
    <scope>METHYLATION AT LYS-5 AND LYS-10</scope>
</reference>
<reference key="9">
    <citation type="journal article" date="2003" name="Curr. Biol.">
        <title>The C. elegans Tousled-like kinase (TLK-1) has an essential role in transcription.</title>
        <authorList>
            <person name="Han Z."/>
            <person name="Saam J.R."/>
            <person name="Adams H.P."/>
            <person name="Mango S.E."/>
            <person name="Schumacher J.M."/>
        </authorList>
    </citation>
    <scope>PHOSPHORYLATION AT SER-11</scope>
    <scope>METHYLATION AT LYS-5; LYS-10 AND LYS-37</scope>
</reference>
<reference key="10">
    <citation type="journal article" date="2003" name="Exp. Cell Res.">
        <title>Role of Caenorhabditis elegans protein phosphatase type 1, CeGLC-7 beta, in metaphase to anaphase transition during embryonic development.</title>
        <authorList>
            <person name="Sassa T."/>
            <person name="Ueda-Ohba H."/>
            <person name="Kitamura K."/>
            <person name="Harada S."/>
            <person name="Hosono R."/>
        </authorList>
    </citation>
    <scope>PHOSPHORYLATION AT SER-11</scope>
</reference>
<reference key="11">
    <citation type="journal article" date="2003" name="Genes Cells">
        <title>Caenorhabditis elegans RBX1 is essential for meiosis, mitotic chromosomal condensation and segregation, and cytokinesis.</title>
        <authorList>
            <person name="Sasagawa Y."/>
            <person name="Urano T."/>
            <person name="Kohara Y."/>
            <person name="Takahashi H."/>
            <person name="Higashitani A."/>
        </authorList>
    </citation>
    <scope>PHOSPHORYLATION AT SER-11 AND SER-29</scope>
</reference>
<reference key="12">
    <citation type="journal article" date="2004" name="Curr. Biol.">
        <title>The MES-2/MES-3/MES-6 complex and regulation of histone H3 methylation in C. elegans.</title>
        <authorList>
            <person name="Bender L.B."/>
            <person name="Cao R."/>
            <person name="Zhang Y."/>
            <person name="Strome S."/>
        </authorList>
    </citation>
    <scope>METHYLATION AT LYS-28</scope>
</reference>
<reference key="13">
    <citation type="journal article" date="2004" name="Nat. Genet.">
        <title>Meiotic pairing and imprinted X chromatin assembly in Caenorhabditis elegans.</title>
        <authorList>
            <person name="Bean C.J."/>
            <person name="Schaner C.E."/>
            <person name="Kelly W.G."/>
        </authorList>
    </citation>
    <scope>ACETYLATION AT LYS-10 AND LYS-15</scope>
    <scope>METHYLATION AT LYS-5 AND LYS-10</scope>
    <scope>PHOSPHORYLATION AT SER-11</scope>
</reference>
<reference key="14">
    <citation type="journal article" date="2006" name="Cell">
        <title>Reversal of histone lysine trimethylation by the JMJD2 family of histone demethylases.</title>
        <authorList>
            <person name="Whetstine J.R."/>
            <person name="Nottke A."/>
            <person name="Lan F."/>
            <person name="Huarte M."/>
            <person name="Smolikov S."/>
            <person name="Chen Z."/>
            <person name="Spooner E."/>
            <person name="Li E."/>
            <person name="Zhang G."/>
            <person name="Colaiacovo M."/>
            <person name="Shi Y."/>
        </authorList>
    </citation>
    <scope>METHYLATION AT LYS-10 AND LYS-37</scope>
</reference>
<reference evidence="16" key="15">
    <citation type="journal article" date="2021" name="J. Biol. Chem.">
        <title>Binding specificity and function of the SWI/SNF subunit SMARCA4 bromodomain interaction with acetylated histone H3K14.</title>
        <authorList>
            <person name="Enriquez P."/>
            <person name="Krajewski K."/>
            <person name="Strahl B.D."/>
            <person name="Rothbart S.B."/>
            <person name="Dowen R.H."/>
            <person name="Rose R.B."/>
        </authorList>
    </citation>
    <scope>X-RAY CRYSTALLOGRAPHY (1.30 ANGSTROMS) OF 8-21 IN COMPLEX WITH THE BROMO DOMAIN OF SWSN-4</scope>
    <scope>INTERACTION WITH SWSN-4</scope>
</reference>
<name>H3_CAEEL</name>
<accession>P08898</accession>
<accession>Q9TW44</accession>
<keyword id="KW-0002">3D-structure</keyword>
<keyword id="KW-0007">Acetylation</keyword>
<keyword id="KW-0158">Chromosome</keyword>
<keyword id="KW-0903">Direct protein sequencing</keyword>
<keyword id="KW-0238">DNA-binding</keyword>
<keyword id="KW-0488">Methylation</keyword>
<keyword id="KW-0544">Nucleosome core</keyword>
<keyword id="KW-0539">Nucleus</keyword>
<keyword id="KW-0597">Phosphoprotein</keyword>
<keyword id="KW-1185">Reference proteome</keyword>
<dbReference type="EMBL" id="X15634">
    <property type="protein sequence ID" value="CAA33644.1"/>
    <property type="molecule type" value="Genomic_DNA"/>
</dbReference>
<dbReference type="EMBL" id="FO081018">
    <property type="protein sequence ID" value="CCD68531.1"/>
    <property type="molecule type" value="Genomic_DNA"/>
</dbReference>
<dbReference type="EMBL" id="FO081059">
    <property type="protein sequence ID" value="CCD68868.1"/>
    <property type="molecule type" value="Genomic_DNA"/>
</dbReference>
<dbReference type="EMBL" id="FO081135">
    <property type="protein sequence ID" value="CCD69390.1"/>
    <property type="molecule type" value="Genomic_DNA"/>
</dbReference>
<dbReference type="EMBL" id="FO081223">
    <property type="protein sequence ID" value="CCD70027.1"/>
    <property type="molecule type" value="Genomic_DNA"/>
</dbReference>
<dbReference type="EMBL" id="FO081551">
    <property type="protein sequence ID" value="CCD72363.1"/>
    <property type="molecule type" value="Genomic_DNA"/>
</dbReference>
<dbReference type="EMBL" id="FO081551">
    <property type="protein sequence ID" value="CCD72373.1"/>
    <property type="molecule type" value="Genomic_DNA"/>
</dbReference>
<dbReference type="EMBL" id="Z68336">
    <property type="protein sequence ID" value="CAA92733.1"/>
    <property type="molecule type" value="Genomic_DNA"/>
</dbReference>
<dbReference type="EMBL" id="Z73102">
    <property type="protein sequence ID" value="CAA97411.1"/>
    <property type="molecule type" value="Genomic_DNA"/>
</dbReference>
<dbReference type="EMBL" id="Z81495">
    <property type="protein sequence ID" value="CAB04057.1"/>
    <property type="molecule type" value="Genomic_DNA"/>
</dbReference>
<dbReference type="EMBL" id="Z82271">
    <property type="protein sequence ID" value="CAB05209.1"/>
    <property type="molecule type" value="Genomic_DNA"/>
</dbReference>
<dbReference type="EMBL" id="Z83245">
    <property type="protein sequence ID" value="CAB05831.1"/>
    <property type="molecule type" value="Genomic_DNA"/>
</dbReference>
<dbReference type="EMBL" id="Z83245">
    <property type="protein sequence ID" value="CAB05833.1"/>
    <property type="molecule type" value="Genomic_DNA"/>
</dbReference>
<dbReference type="EMBL" id="Z83245">
    <property type="protein sequence ID" value="CAB05834.1"/>
    <property type="molecule type" value="Genomic_DNA"/>
</dbReference>
<dbReference type="EMBL" id="Z93388">
    <property type="protein sequence ID" value="CAB07653.1"/>
    <property type="molecule type" value="Genomic_DNA"/>
</dbReference>
<dbReference type="EMBL" id="AF304122">
    <property type="protein sequence ID" value="AAG50235.1"/>
    <property type="molecule type" value="mRNA"/>
</dbReference>
<dbReference type="PIR" id="S04241">
    <property type="entry name" value="HSKW3"/>
</dbReference>
<dbReference type="RefSeq" id="NP_496890.1">
    <property type="nucleotide sequence ID" value="NM_064489.1"/>
</dbReference>
<dbReference type="RefSeq" id="NP_496894.1">
    <property type="nucleotide sequence ID" value="NM_064493.5"/>
</dbReference>
<dbReference type="RefSeq" id="NP_496895.1">
    <property type="nucleotide sequence ID" value="NM_064494.1"/>
</dbReference>
<dbReference type="RefSeq" id="NP_496899.1">
    <property type="nucleotide sequence ID" value="NM_064498.1"/>
</dbReference>
<dbReference type="RefSeq" id="NP_501204.1">
    <property type="nucleotide sequence ID" value="NM_068803.3"/>
</dbReference>
<dbReference type="RefSeq" id="NP_501407.1">
    <property type="nucleotide sequence ID" value="NM_069006.3"/>
</dbReference>
<dbReference type="RefSeq" id="NP_502134.1">
    <property type="nucleotide sequence ID" value="NM_069733.3"/>
</dbReference>
<dbReference type="RefSeq" id="NP_502138.1">
    <property type="nucleotide sequence ID" value="NM_069737.1"/>
</dbReference>
<dbReference type="RefSeq" id="NP_502153.1">
    <property type="nucleotide sequence ID" value="NM_069752.3"/>
</dbReference>
<dbReference type="RefSeq" id="NP_505199.1">
    <property type="nucleotide sequence ID" value="NM_072798.1"/>
</dbReference>
<dbReference type="RefSeq" id="NP_505276.1">
    <property type="nucleotide sequence ID" value="NM_072875.1"/>
</dbReference>
<dbReference type="RefSeq" id="NP_505292.1">
    <property type="nucleotide sequence ID" value="NM_072891.1"/>
</dbReference>
<dbReference type="RefSeq" id="NP_505297.1">
    <property type="nucleotide sequence ID" value="NM_072896.3"/>
</dbReference>
<dbReference type="RefSeq" id="NP_507033.1">
    <property type="nucleotide sequence ID" value="NM_074632.3"/>
</dbReference>
<dbReference type="PDB" id="3N9L">
    <property type="method" value="X-ray"/>
    <property type="resolution" value="2.80 A"/>
    <property type="chains" value="B=2-16"/>
</dbReference>
<dbReference type="PDB" id="3N9N">
    <property type="method" value="X-ray"/>
    <property type="resolution" value="2.30 A"/>
    <property type="chains" value="B/C=2-33"/>
</dbReference>
<dbReference type="PDB" id="3N9O">
    <property type="method" value="X-ray"/>
    <property type="resolution" value="2.31 A"/>
    <property type="chains" value="B=2-16, C=2-18"/>
</dbReference>
<dbReference type="PDB" id="3N9P">
    <property type="method" value="X-ray"/>
    <property type="resolution" value="2.39 A"/>
    <property type="chains" value="B/C=2-33"/>
</dbReference>
<dbReference type="PDB" id="3N9Q">
    <property type="method" value="X-ray"/>
    <property type="resolution" value="2.30 A"/>
    <property type="chains" value="B=2-16, C=20-36"/>
</dbReference>
<dbReference type="PDB" id="7LHY">
    <property type="method" value="X-ray"/>
    <property type="resolution" value="1.30 A"/>
    <property type="chains" value="B=8-21"/>
</dbReference>
<dbReference type="PDBsum" id="3N9L"/>
<dbReference type="PDBsum" id="3N9N"/>
<dbReference type="PDBsum" id="3N9O"/>
<dbReference type="PDBsum" id="3N9P"/>
<dbReference type="PDBsum" id="3N9Q"/>
<dbReference type="PDBsum" id="7LHY"/>
<dbReference type="BMRB" id="P08898"/>
<dbReference type="SMR" id="P08898"/>
<dbReference type="BioGRID" id="40316">
    <property type="interactions" value="1"/>
</dbReference>
<dbReference type="BioGRID" id="42741">
    <property type="interactions" value="1"/>
</dbReference>
<dbReference type="BioGRID" id="45065">
    <property type="interactions" value="4"/>
</dbReference>
<dbReference type="BioGRID" id="46690">
    <property type="interactions" value="1"/>
</dbReference>
<dbReference type="BioGRID" id="49588">
    <property type="interactions" value="1"/>
</dbReference>
<dbReference type="BioGRID" id="50996">
    <property type="interactions" value="1"/>
</dbReference>
<dbReference type="BioGRID" id="56173">
    <property type="interactions" value="1"/>
</dbReference>
<dbReference type="FunCoup" id="P08898">
    <property type="interactions" value="623"/>
</dbReference>
<dbReference type="IntAct" id="P08898">
    <property type="interactions" value="1"/>
</dbReference>
<dbReference type="STRING" id="6239.B0035.10.1"/>
<dbReference type="iPTMnet" id="P08898"/>
<dbReference type="PaxDb" id="6239-B0035.10"/>
<dbReference type="PeptideAtlas" id="P08898"/>
<dbReference type="EnsemblMetazoa" id="B0035.10.1">
    <property type="protein sequence ID" value="B0035.10.1"/>
    <property type="gene ID" value="WBGene00001919"/>
</dbReference>
<dbReference type="EnsemblMetazoa" id="F07B7.5.1">
    <property type="protein sequence ID" value="F07B7.5.1"/>
    <property type="gene ID" value="WBGene00001923"/>
</dbReference>
<dbReference type="EnsemblMetazoa" id="F08G2.3.1">
    <property type="protein sequence ID" value="F08G2.3.1"/>
    <property type="gene ID" value="WBGene00001916"/>
</dbReference>
<dbReference type="EnsemblMetazoa" id="F17E9.10.1">
    <property type="protein sequence ID" value="F17E9.10.1"/>
    <property type="gene ID" value="WBGene00001906"/>
</dbReference>
<dbReference type="EnsemblMetazoa" id="F22B3.2.1">
    <property type="protein sequence ID" value="F22B3.2.1"/>
    <property type="gene ID" value="WBGene00001937"/>
</dbReference>
<dbReference type="EnsemblMetazoa" id="F45F2.13.1">
    <property type="protein sequence ID" value="F45F2.13.1"/>
    <property type="gene ID" value="WBGene00001880"/>
</dbReference>
<dbReference type="EnsemblMetazoa" id="F54E12.1.1">
    <property type="protein sequence ID" value="F54E12.1.1"/>
    <property type="gene ID" value="WBGene00001929"/>
</dbReference>
<dbReference type="EnsemblMetazoa" id="F55G1.2.1">
    <property type="protein sequence ID" value="F55G1.2.1"/>
    <property type="gene ID" value="WBGene00001933"/>
</dbReference>
<dbReference type="EnsemblMetazoa" id="K06C4.13.1">
    <property type="protein sequence ID" value="K06C4.13.1"/>
    <property type="gene ID" value="WBGene00001901"/>
</dbReference>
<dbReference type="EnsemblMetazoa" id="K06C4.5.1">
    <property type="protein sequence ID" value="K06C4.5.1"/>
    <property type="gene ID" value="WBGene00001891"/>
</dbReference>
<dbReference type="EnsemblMetazoa" id="T10C6.13.1">
    <property type="protein sequence ID" value="T10C6.13.1"/>
    <property type="gene ID" value="WBGene00001876"/>
</dbReference>
<dbReference type="EnsemblMetazoa" id="ZK131.2.1">
    <property type="protein sequence ID" value="ZK131.2.1"/>
    <property type="gene ID" value="WBGene00001899"/>
</dbReference>
<dbReference type="EnsemblMetazoa" id="ZK131.3.1">
    <property type="protein sequence ID" value="ZK131.3.1"/>
    <property type="gene ID" value="WBGene00001883"/>
</dbReference>
<dbReference type="EnsemblMetazoa" id="ZK131.7.1">
    <property type="protein sequence ID" value="ZK131.7.1"/>
    <property type="gene ID" value="WBGene00001887"/>
</dbReference>
<dbReference type="GeneID" id="175030"/>
<dbReference type="GeneID" id="175031"/>
<dbReference type="GeneID" id="177628"/>
<dbReference type="GeneID" id="180074"/>
<dbReference type="GeneID" id="181821"/>
<dbReference type="GeneID" id="184113"/>
<dbReference type="GeneID" id="184804"/>
<dbReference type="GeneID" id="186250"/>
<dbReference type="GeneID" id="186325"/>
<dbReference type="GeneID" id="191668"/>
<dbReference type="GeneID" id="191672"/>
<dbReference type="GeneID" id="191673"/>
<dbReference type="GeneID" id="246024"/>
<dbReference type="KEGG" id="cel:CELE_B0035.10"/>
<dbReference type="KEGG" id="cel:CELE_F07B7.5"/>
<dbReference type="KEGG" id="cel:CELE_F17E9.10"/>
<dbReference type="KEGG" id="cel:CELE_F22B3.2"/>
<dbReference type="KEGG" id="cel:CELE_F45F2.13"/>
<dbReference type="KEGG" id="cel:CELE_F54E12.1"/>
<dbReference type="KEGG" id="cel:CELE_F55G1.2"/>
<dbReference type="KEGG" id="cel:CELE_K03A1.1"/>
<dbReference type="KEGG" id="cel:CELE_K06C4.13"/>
<dbReference type="KEGG" id="cel:CELE_K06C4.5"/>
<dbReference type="KEGG" id="cel:CELE_T10C6.13"/>
<dbReference type="KEGG" id="cel:CELE_ZK131.2"/>
<dbReference type="KEGG" id="cel:CELE_ZK131.3"/>
<dbReference type="KEGG" id="cel:CELE_ZK131.7"/>
<dbReference type="UCSC" id="ZK131.7">
    <property type="organism name" value="c. elegans"/>
</dbReference>
<dbReference type="AGR" id="WB:WBGene00001876"/>
<dbReference type="AGR" id="WB:WBGene00001880"/>
<dbReference type="AGR" id="WB:WBGene00001883"/>
<dbReference type="AGR" id="WB:WBGene00001887"/>
<dbReference type="AGR" id="WB:WBGene00001891"/>
<dbReference type="AGR" id="WB:WBGene00001899"/>
<dbReference type="AGR" id="WB:WBGene00001901"/>
<dbReference type="AGR" id="WB:WBGene00001906"/>
<dbReference type="AGR" id="WB:WBGene00001916"/>
<dbReference type="AGR" id="WB:WBGene00001919"/>
<dbReference type="AGR" id="WB:WBGene00001923"/>
<dbReference type="AGR" id="WB:WBGene00001929"/>
<dbReference type="AGR" id="WB:WBGene00001933"/>
<dbReference type="AGR" id="WB:WBGene00001937"/>
<dbReference type="CTD" id="13221387"/>
<dbReference type="CTD" id="175030"/>
<dbReference type="CTD" id="175031"/>
<dbReference type="CTD" id="177628"/>
<dbReference type="CTD" id="180074"/>
<dbReference type="CTD" id="181821"/>
<dbReference type="CTD" id="184113"/>
<dbReference type="CTD" id="184804"/>
<dbReference type="CTD" id="186250"/>
<dbReference type="CTD" id="186325"/>
<dbReference type="CTD" id="191668"/>
<dbReference type="CTD" id="191672"/>
<dbReference type="CTD" id="191673"/>
<dbReference type="CTD" id="246024"/>
<dbReference type="WormBase" id="B0035.10">
    <property type="protein sequence ID" value="CE03253"/>
    <property type="gene ID" value="WBGene00001919"/>
    <property type="gene designation" value="his-45"/>
</dbReference>
<dbReference type="WormBase" id="F07B7.5">
    <property type="protein sequence ID" value="CE03253"/>
    <property type="gene ID" value="WBGene00001923"/>
    <property type="gene designation" value="his-49"/>
</dbReference>
<dbReference type="WormBase" id="F08G2.3">
    <property type="protein sequence ID" value="CE03253"/>
    <property type="gene ID" value="WBGene00001916"/>
    <property type="gene designation" value="his-42"/>
</dbReference>
<dbReference type="WormBase" id="F17E9.10">
    <property type="protein sequence ID" value="CE03253"/>
    <property type="gene ID" value="WBGene00001906"/>
    <property type="gene designation" value="his-32"/>
</dbReference>
<dbReference type="WormBase" id="F22B3.2">
    <property type="protein sequence ID" value="CE03253"/>
    <property type="gene ID" value="WBGene00001937"/>
    <property type="gene designation" value="his-63"/>
</dbReference>
<dbReference type="WormBase" id="F45F2.13">
    <property type="protein sequence ID" value="CE03253"/>
    <property type="gene ID" value="WBGene00001880"/>
    <property type="gene designation" value="his-6"/>
</dbReference>
<dbReference type="WormBase" id="F54E12.1">
    <property type="protein sequence ID" value="CE03253"/>
    <property type="gene ID" value="WBGene00001929"/>
    <property type="gene designation" value="his-55"/>
</dbReference>
<dbReference type="WormBase" id="F55G1.2">
    <property type="protein sequence ID" value="CE03253"/>
    <property type="gene ID" value="WBGene00001933"/>
    <property type="gene designation" value="his-59"/>
</dbReference>
<dbReference type="WormBase" id="K06C4.13">
    <property type="protein sequence ID" value="CE03253"/>
    <property type="gene ID" value="WBGene00001901"/>
    <property type="gene designation" value="his-27"/>
</dbReference>
<dbReference type="WormBase" id="K06C4.5">
    <property type="protein sequence ID" value="CE03253"/>
    <property type="gene ID" value="WBGene00001891"/>
    <property type="gene designation" value="his-17"/>
</dbReference>
<dbReference type="WormBase" id="T10C6.13">
    <property type="protein sequence ID" value="CE03253"/>
    <property type="gene ID" value="WBGene00001876"/>
    <property type="gene designation" value="his-2"/>
</dbReference>
<dbReference type="WormBase" id="ZK131.2">
    <property type="protein sequence ID" value="CE03253"/>
    <property type="gene ID" value="WBGene00001899"/>
    <property type="gene designation" value="his-25"/>
</dbReference>
<dbReference type="WormBase" id="ZK131.3">
    <property type="protein sequence ID" value="CE03253"/>
    <property type="gene ID" value="WBGene00001883"/>
    <property type="gene designation" value="his-9"/>
</dbReference>
<dbReference type="WormBase" id="ZK131.7">
    <property type="protein sequence ID" value="CE03253"/>
    <property type="gene ID" value="WBGene00001887"/>
    <property type="gene designation" value="his-13"/>
</dbReference>
<dbReference type="eggNOG" id="KOG1745">
    <property type="taxonomic scope" value="Eukaryota"/>
</dbReference>
<dbReference type="GeneTree" id="ENSGT01130000278271"/>
<dbReference type="HOGENOM" id="CLU_078295_4_0_1"/>
<dbReference type="InParanoid" id="P08898"/>
<dbReference type="OrthoDB" id="4025405at2759"/>
<dbReference type="PhylomeDB" id="P08898"/>
<dbReference type="Reactome" id="R-CEL-2559580">
    <property type="pathway name" value="Oxidative Stress Induced Senescence"/>
</dbReference>
<dbReference type="Reactome" id="R-CEL-3214841">
    <property type="pathway name" value="PKMTs methylate histone lysines"/>
</dbReference>
<dbReference type="Reactome" id="R-CEL-3214842">
    <property type="pathway name" value="HDMs demethylate histones"/>
</dbReference>
<dbReference type="Reactome" id="R-CEL-3214847">
    <property type="pathway name" value="HATs acetylate histones"/>
</dbReference>
<dbReference type="Reactome" id="R-CEL-3214858">
    <property type="pathway name" value="RMTs methylate histone arginines"/>
</dbReference>
<dbReference type="Reactome" id="R-CEL-5250924">
    <property type="pathway name" value="B-WICH complex positively regulates rRNA expression"/>
</dbReference>
<dbReference type="Reactome" id="R-CEL-5578749">
    <property type="pathway name" value="Transcriptional regulation by small RNAs"/>
</dbReference>
<dbReference type="Reactome" id="R-CEL-68616">
    <property type="pathway name" value="Assembly of the ORC complex at the origin of replication"/>
</dbReference>
<dbReference type="Reactome" id="R-CEL-73772">
    <property type="pathway name" value="RNA Polymerase I Promoter Escape"/>
</dbReference>
<dbReference type="Reactome" id="R-CEL-8936459">
    <property type="pathway name" value="RUNX1 regulates genes involved in megakaryocyte differentiation and platelet function"/>
</dbReference>
<dbReference type="Reactome" id="R-CEL-983231">
    <property type="pathway name" value="Factors involved in megakaryocyte development and platelet production"/>
</dbReference>
<dbReference type="Reactome" id="R-CEL-9843940">
    <property type="pathway name" value="Regulation of endogenous retroelements by KRAB-ZFP proteins"/>
</dbReference>
<dbReference type="EvolutionaryTrace" id="P08898"/>
<dbReference type="PRO" id="PR:P08898"/>
<dbReference type="Proteomes" id="UP000001940">
    <property type="component" value="Chromosome II"/>
</dbReference>
<dbReference type="Proteomes" id="UP000001940">
    <property type="component" value="Chromosome IV"/>
</dbReference>
<dbReference type="Proteomes" id="UP000001940">
    <property type="component" value="Chromosome V"/>
</dbReference>
<dbReference type="Bgee" id="WBGene00001876">
    <property type="expression patterns" value="Expressed in pharyngeal muscle cell (C elegans) and 4 other cell types or tissues"/>
</dbReference>
<dbReference type="GO" id="GO:0000786">
    <property type="term" value="C:nucleosome"/>
    <property type="evidence" value="ECO:0007669"/>
    <property type="project" value="UniProtKB-KW"/>
</dbReference>
<dbReference type="GO" id="GO:0005634">
    <property type="term" value="C:nucleus"/>
    <property type="evidence" value="ECO:0007669"/>
    <property type="project" value="UniProtKB-SubCell"/>
</dbReference>
<dbReference type="GO" id="GO:0003677">
    <property type="term" value="F:DNA binding"/>
    <property type="evidence" value="ECO:0007669"/>
    <property type="project" value="UniProtKB-KW"/>
</dbReference>
<dbReference type="GO" id="GO:0046982">
    <property type="term" value="F:protein heterodimerization activity"/>
    <property type="evidence" value="ECO:0007669"/>
    <property type="project" value="InterPro"/>
</dbReference>
<dbReference type="GO" id="GO:0030527">
    <property type="term" value="F:structural constituent of chromatin"/>
    <property type="evidence" value="ECO:0007669"/>
    <property type="project" value="InterPro"/>
</dbReference>
<dbReference type="CDD" id="cd22911">
    <property type="entry name" value="HFD_H3"/>
    <property type="match status" value="1"/>
</dbReference>
<dbReference type="FunFam" id="1.10.20.10:FF:000078">
    <property type="entry name" value="Histone H3"/>
    <property type="match status" value="1"/>
</dbReference>
<dbReference type="FunFam" id="1.10.20.10:FF:000044">
    <property type="entry name" value="Histone H3.3"/>
    <property type="match status" value="1"/>
</dbReference>
<dbReference type="Gene3D" id="1.10.20.10">
    <property type="entry name" value="Histone, subunit A"/>
    <property type="match status" value="1"/>
</dbReference>
<dbReference type="InterPro" id="IPR009072">
    <property type="entry name" value="Histone-fold"/>
</dbReference>
<dbReference type="InterPro" id="IPR007125">
    <property type="entry name" value="Histone_H2A/H2B/H3"/>
</dbReference>
<dbReference type="InterPro" id="IPR000164">
    <property type="entry name" value="Histone_H3/CENP-A"/>
</dbReference>
<dbReference type="PANTHER" id="PTHR11426">
    <property type="entry name" value="HISTONE H3"/>
    <property type="match status" value="1"/>
</dbReference>
<dbReference type="Pfam" id="PF00125">
    <property type="entry name" value="Histone"/>
    <property type="match status" value="1"/>
</dbReference>
<dbReference type="PRINTS" id="PR00622">
    <property type="entry name" value="HISTONEH3"/>
</dbReference>
<dbReference type="SMART" id="SM00428">
    <property type="entry name" value="H3"/>
    <property type="match status" value="1"/>
</dbReference>
<dbReference type="SUPFAM" id="SSF47113">
    <property type="entry name" value="Histone-fold"/>
    <property type="match status" value="1"/>
</dbReference>
<dbReference type="PROSITE" id="PS00322">
    <property type="entry name" value="HISTONE_H3_1"/>
    <property type="match status" value="1"/>
</dbReference>
<dbReference type="PROSITE" id="PS00959">
    <property type="entry name" value="HISTONE_H3_2"/>
    <property type="match status" value="1"/>
</dbReference>